<sequence length="302" mass="33205">MNQTAINRADVRTRFIFDDMPVRGLHVRLENVWQHIVKQKNYPAAIRRALGELLAAGVLLSGNLKNEGTLIVQVQGRGRLKMLVAEAASDRTVRATARWDETAEIADDESLGDLLGEGGVFVLTLQPKDGEPWQGVVPLEGGGIAQMLVNYMKRSEQLDTHIVLSASDEAAGGLLVQRLPEEVLDEEAWEHVSTLARTLTAEELAGLDAQHVLYRLFHETPPRVFEPETFEFSCTCSRGKVSDMLLMLGGEEVGGVVVEQGSIEVDCDFCHSKYVFDETDVNALFGEDVVGVAKGLPRHTVQ</sequence>
<protein>
    <recommendedName>
        <fullName evidence="1">33 kDa chaperonin</fullName>
    </recommendedName>
    <alternativeName>
        <fullName evidence="1">Heat shock protein 33 homolog</fullName>
        <shortName evidence="1">HSP33</shortName>
    </alternativeName>
</protein>
<evidence type="ECO:0000255" key="1">
    <source>
        <dbReference type="HAMAP-Rule" id="MF_00117"/>
    </source>
</evidence>
<keyword id="KW-0143">Chaperone</keyword>
<keyword id="KW-0963">Cytoplasm</keyword>
<keyword id="KW-1015">Disulfide bond</keyword>
<keyword id="KW-0676">Redox-active center</keyword>
<keyword id="KW-1185">Reference proteome</keyword>
<keyword id="KW-0862">Zinc</keyword>
<reference key="1">
    <citation type="journal article" date="2000" name="Science">
        <title>Complete genome sequence of Neisseria meningitidis serogroup B strain MC58.</title>
        <authorList>
            <person name="Tettelin H."/>
            <person name="Saunders N.J."/>
            <person name="Heidelberg J.F."/>
            <person name="Jeffries A.C."/>
            <person name="Nelson K.E."/>
            <person name="Eisen J.A."/>
            <person name="Ketchum K.A."/>
            <person name="Hood D.W."/>
            <person name="Peden J.F."/>
            <person name="Dodson R.J."/>
            <person name="Nelson W.C."/>
            <person name="Gwinn M.L."/>
            <person name="DeBoy R.T."/>
            <person name="Peterson J.D."/>
            <person name="Hickey E.K."/>
            <person name="Haft D.H."/>
            <person name="Salzberg S.L."/>
            <person name="White O."/>
            <person name="Fleischmann R.D."/>
            <person name="Dougherty B.A."/>
            <person name="Mason T.M."/>
            <person name="Ciecko A."/>
            <person name="Parksey D.S."/>
            <person name="Blair E."/>
            <person name="Cittone H."/>
            <person name="Clark E.B."/>
            <person name="Cotton M.D."/>
            <person name="Utterback T.R."/>
            <person name="Khouri H.M."/>
            <person name="Qin H."/>
            <person name="Vamathevan J.J."/>
            <person name="Gill J."/>
            <person name="Scarlato V."/>
            <person name="Masignani V."/>
            <person name="Pizza M."/>
            <person name="Grandi G."/>
            <person name="Sun L."/>
            <person name="Smith H.O."/>
            <person name="Fraser C.M."/>
            <person name="Moxon E.R."/>
            <person name="Rappuoli R."/>
            <person name="Venter J.C."/>
        </authorList>
    </citation>
    <scope>NUCLEOTIDE SEQUENCE [LARGE SCALE GENOMIC DNA]</scope>
    <source>
        <strain>ATCC BAA-335 / MC58</strain>
    </source>
</reference>
<name>HSLO_NEIMB</name>
<proteinExistence type="inferred from homology"/>
<feature type="chain" id="PRO_0000192187" description="33 kDa chaperonin">
    <location>
        <begin position="1"/>
        <end position="302"/>
    </location>
</feature>
<feature type="disulfide bond" description="Redox-active" evidence="1">
    <location>
        <begin position="234"/>
        <end position="236"/>
    </location>
</feature>
<feature type="disulfide bond" description="Redox-active" evidence="1">
    <location>
        <begin position="267"/>
        <end position="270"/>
    </location>
</feature>
<comment type="function">
    <text evidence="1">Redox regulated molecular chaperone. Protects both thermally unfolding and oxidatively damaged proteins from irreversible aggregation. Plays an important role in the bacterial defense system toward oxidative stress.</text>
</comment>
<comment type="subcellular location">
    <subcellularLocation>
        <location evidence="1">Cytoplasm</location>
    </subcellularLocation>
</comment>
<comment type="PTM">
    <text evidence="1">Under oxidizing conditions two disulfide bonds are formed involving the reactive cysteines. Under reducing conditions zinc is bound to the reactive cysteines and the protein is inactive.</text>
</comment>
<comment type="similarity">
    <text evidence="1">Belongs to the HSP33 family.</text>
</comment>
<gene>
    <name evidence="1" type="primary">hslO</name>
    <name type="ordered locus">NMB2000</name>
</gene>
<organism>
    <name type="scientific">Neisseria meningitidis serogroup B (strain ATCC BAA-335 / MC58)</name>
    <dbReference type="NCBI Taxonomy" id="122586"/>
    <lineage>
        <taxon>Bacteria</taxon>
        <taxon>Pseudomonadati</taxon>
        <taxon>Pseudomonadota</taxon>
        <taxon>Betaproteobacteria</taxon>
        <taxon>Neisseriales</taxon>
        <taxon>Neisseriaceae</taxon>
        <taxon>Neisseria</taxon>
    </lineage>
</organism>
<dbReference type="EMBL" id="AE002098">
    <property type="protein sequence ID" value="AAF42327.1"/>
    <property type="molecule type" value="Genomic_DNA"/>
</dbReference>
<dbReference type="PIR" id="F81016">
    <property type="entry name" value="F81016"/>
</dbReference>
<dbReference type="RefSeq" id="NP_274992.1">
    <property type="nucleotide sequence ID" value="NC_003112.2"/>
</dbReference>
<dbReference type="RefSeq" id="WP_010981020.1">
    <property type="nucleotide sequence ID" value="NC_003112.2"/>
</dbReference>
<dbReference type="SMR" id="Q9JXK1"/>
<dbReference type="FunCoup" id="Q9JXK1">
    <property type="interactions" value="273"/>
</dbReference>
<dbReference type="STRING" id="122586.NMB2000"/>
<dbReference type="PaxDb" id="122586-NMB2000"/>
<dbReference type="KEGG" id="nme:NMB2000"/>
<dbReference type="PATRIC" id="fig|122586.8.peg.2554"/>
<dbReference type="HOGENOM" id="CLU_054493_0_0_4"/>
<dbReference type="InParanoid" id="Q9JXK1"/>
<dbReference type="OrthoDB" id="9793753at2"/>
<dbReference type="Proteomes" id="UP000000425">
    <property type="component" value="Chromosome"/>
</dbReference>
<dbReference type="GO" id="GO:0005737">
    <property type="term" value="C:cytoplasm"/>
    <property type="evidence" value="ECO:0000318"/>
    <property type="project" value="GO_Central"/>
</dbReference>
<dbReference type="GO" id="GO:0044183">
    <property type="term" value="F:protein folding chaperone"/>
    <property type="evidence" value="ECO:0000318"/>
    <property type="project" value="GO_Central"/>
</dbReference>
<dbReference type="GO" id="GO:0051082">
    <property type="term" value="F:unfolded protein binding"/>
    <property type="evidence" value="ECO:0007669"/>
    <property type="project" value="UniProtKB-UniRule"/>
</dbReference>
<dbReference type="GO" id="GO:0042026">
    <property type="term" value="P:protein refolding"/>
    <property type="evidence" value="ECO:0000318"/>
    <property type="project" value="GO_Central"/>
</dbReference>
<dbReference type="CDD" id="cd00498">
    <property type="entry name" value="Hsp33"/>
    <property type="match status" value="1"/>
</dbReference>
<dbReference type="Gene3D" id="1.10.287.480">
    <property type="entry name" value="helix hairpin bin"/>
    <property type="match status" value="1"/>
</dbReference>
<dbReference type="Gene3D" id="3.55.30.10">
    <property type="entry name" value="Hsp33 domain"/>
    <property type="match status" value="1"/>
</dbReference>
<dbReference type="Gene3D" id="3.90.1280.10">
    <property type="entry name" value="HSP33 redox switch-like"/>
    <property type="match status" value="1"/>
</dbReference>
<dbReference type="HAMAP" id="MF_00117">
    <property type="entry name" value="HslO"/>
    <property type="match status" value="1"/>
</dbReference>
<dbReference type="InterPro" id="IPR000397">
    <property type="entry name" value="Heat_shock_Hsp33"/>
</dbReference>
<dbReference type="InterPro" id="IPR016154">
    <property type="entry name" value="Heat_shock_Hsp33_C"/>
</dbReference>
<dbReference type="InterPro" id="IPR016153">
    <property type="entry name" value="Heat_shock_Hsp33_N"/>
</dbReference>
<dbReference type="InterPro" id="IPR023212">
    <property type="entry name" value="Hsp33_helix_hairpin_bin_dom_sf"/>
</dbReference>
<dbReference type="NCBIfam" id="NF001033">
    <property type="entry name" value="PRK00114.1"/>
    <property type="match status" value="1"/>
</dbReference>
<dbReference type="PANTHER" id="PTHR30111">
    <property type="entry name" value="33 KDA CHAPERONIN"/>
    <property type="match status" value="1"/>
</dbReference>
<dbReference type="PANTHER" id="PTHR30111:SF1">
    <property type="entry name" value="33 KDA CHAPERONIN"/>
    <property type="match status" value="1"/>
</dbReference>
<dbReference type="Pfam" id="PF01430">
    <property type="entry name" value="HSP33"/>
    <property type="match status" value="1"/>
</dbReference>
<dbReference type="PIRSF" id="PIRSF005261">
    <property type="entry name" value="Heat_shock_Hsp33"/>
    <property type="match status" value="1"/>
</dbReference>
<dbReference type="SUPFAM" id="SSF64397">
    <property type="entry name" value="Hsp33 domain"/>
    <property type="match status" value="1"/>
</dbReference>
<dbReference type="SUPFAM" id="SSF118352">
    <property type="entry name" value="HSP33 redox switch-like"/>
    <property type="match status" value="1"/>
</dbReference>
<accession>Q9JXK1</accession>